<name>GLO2_ECOLI</name>
<reference key="1">
    <citation type="submission" date="1996-02" db="EMBL/GenBank/DDBJ databases">
        <title>Systematic sequencing of the Escherichia coli genome: analysis of the 4.0 - 6.0 min (189,987 - 281,416bp) region.</title>
        <authorList>
            <person name="Takemoto K."/>
            <person name="Mori H."/>
            <person name="Murayama N."/>
            <person name="Kataoka K."/>
            <person name="Yano M."/>
            <person name="Itoh T."/>
            <person name="Yamamoto Y."/>
            <person name="Inokuchi H."/>
            <person name="Miki T."/>
            <person name="Hatada E."/>
            <person name="Fukuda R."/>
            <person name="Ichihara S."/>
            <person name="Mizuno T."/>
            <person name="Makino K."/>
            <person name="Nakata A."/>
            <person name="Yura T."/>
            <person name="Sampei G."/>
            <person name="Mizobuchi K."/>
        </authorList>
    </citation>
    <scope>NUCLEOTIDE SEQUENCE [LARGE SCALE GENOMIC DNA]</scope>
    <source>
        <strain>K12 / W3110 / ATCC 27325 / DSM 5911</strain>
    </source>
</reference>
<reference key="2">
    <citation type="submission" date="1997-01" db="EMBL/GenBank/DDBJ databases">
        <title>Sequence of minutes 4-25 of Escherichia coli.</title>
        <authorList>
            <person name="Chung E."/>
            <person name="Allen E."/>
            <person name="Araujo R."/>
            <person name="Aparicio A.M."/>
            <person name="Davis K."/>
            <person name="Duncan M."/>
            <person name="Federspiel N."/>
            <person name="Hyman R."/>
            <person name="Kalman S."/>
            <person name="Komp C."/>
            <person name="Kurdi O."/>
            <person name="Lew H."/>
            <person name="Lin D."/>
            <person name="Namath A."/>
            <person name="Oefner P."/>
            <person name="Roberts D."/>
            <person name="Schramm S."/>
            <person name="Davis R.W."/>
        </authorList>
    </citation>
    <scope>NUCLEOTIDE SEQUENCE [LARGE SCALE GENOMIC DNA]</scope>
    <source>
        <strain>K12 / MG1655 / ATCC 47076</strain>
    </source>
</reference>
<reference key="3">
    <citation type="journal article" date="1997" name="Science">
        <title>The complete genome sequence of Escherichia coli K-12.</title>
        <authorList>
            <person name="Blattner F.R."/>
            <person name="Plunkett G. III"/>
            <person name="Bloch C.A."/>
            <person name="Perna N.T."/>
            <person name="Burland V."/>
            <person name="Riley M."/>
            <person name="Collado-Vides J."/>
            <person name="Glasner J.D."/>
            <person name="Rode C.K."/>
            <person name="Mayhew G.F."/>
            <person name="Gregor J."/>
            <person name="Davis N.W."/>
            <person name="Kirkpatrick H.A."/>
            <person name="Goeden M.A."/>
            <person name="Rose D.J."/>
            <person name="Mau B."/>
            <person name="Shao Y."/>
        </authorList>
    </citation>
    <scope>NUCLEOTIDE SEQUENCE [LARGE SCALE GENOMIC DNA]</scope>
    <source>
        <strain>K12 / MG1655 / ATCC 47076</strain>
    </source>
</reference>
<reference key="4">
    <citation type="journal article" date="2006" name="Mol. Syst. Biol.">
        <title>Highly accurate genome sequences of Escherichia coli K-12 strains MG1655 and W3110.</title>
        <authorList>
            <person name="Hayashi K."/>
            <person name="Morooka N."/>
            <person name="Yamamoto Y."/>
            <person name="Fujita K."/>
            <person name="Isono K."/>
            <person name="Choi S."/>
            <person name="Ohtsubo E."/>
            <person name="Baba T."/>
            <person name="Wanner B.L."/>
            <person name="Mori H."/>
            <person name="Horiuchi T."/>
        </authorList>
    </citation>
    <scope>NUCLEOTIDE SEQUENCE [LARGE SCALE GENOMIC DNA]</scope>
    <source>
        <strain>K12 / W3110 / ATCC 27325 / DSM 5911</strain>
    </source>
</reference>
<reference key="5">
    <citation type="journal article" date="2007" name="Arch. Biochem. Biophys.">
        <title>Escherichia coli glyoxalase II is a binuclear zinc-dependent metalloenzyme.</title>
        <authorList>
            <person name="O'Young J."/>
            <person name="Sukdeo N."/>
            <person name="Honek J.F."/>
        </authorList>
    </citation>
    <scope>FUNCTION</scope>
    <scope>CATALYTIC ACTIVITY</scope>
    <scope>BIOPHYSICOCHEMICAL PROPERTIES</scope>
    <scope>COFACTOR</scope>
    <scope>SUBUNIT</scope>
    <scope>MASS SPECTROMETRY</scope>
    <source>
        <strain>K12 / MG1655 / ATCC 47076</strain>
    </source>
</reference>
<reference key="6">
    <citation type="journal article" date="2015" name="FEMS Microbiol. Lett.">
        <title>Deciphering the role of the type II glyoxalase isoenzyme YcbL (GlxII-2) in Escherichia coli.</title>
        <authorList>
            <person name="Reiger M."/>
            <person name="Lassak J."/>
            <person name="Jung K."/>
        </authorList>
    </citation>
    <scope>FUNCTION</scope>
    <scope>CATALYTIC ACTIVITY</scope>
    <scope>COFACTOR</scope>
    <scope>BIOPHYSICOCHEMICAL PROPERTIES</scope>
    <scope>ACTIVITY REGULATION</scope>
    <scope>DISRUPTION PHENOTYPE</scope>
    <scope>PATHWAY</scope>
</reference>
<protein>
    <recommendedName>
        <fullName evidence="7 8">Hydroxyacylglutathione hydrolase GloB</fullName>
        <ecNumber evidence="2 3">3.1.2.6</ecNumber>
    </recommendedName>
    <alternativeName>
        <fullName evidence="4 5">Glyoxalase II</fullName>
        <shortName evidence="4 5">Glx II</shortName>
    </alternativeName>
</protein>
<gene>
    <name evidence="5" type="primary">gloB</name>
    <name type="synonym">yafR</name>
    <name type="ordered locus">b0212</name>
    <name type="ordered locus">JW0202</name>
</gene>
<dbReference type="EC" id="3.1.2.6" evidence="2 3"/>
<dbReference type="EMBL" id="U70214">
    <property type="protein sequence ID" value="AAB08634.1"/>
    <property type="molecule type" value="Genomic_DNA"/>
</dbReference>
<dbReference type="EMBL" id="U00096">
    <property type="protein sequence ID" value="AAC73317.1"/>
    <property type="molecule type" value="Genomic_DNA"/>
</dbReference>
<dbReference type="EMBL" id="AP009048">
    <property type="protein sequence ID" value="BAA77883.1"/>
    <property type="molecule type" value="Genomic_DNA"/>
</dbReference>
<dbReference type="PIR" id="F64745">
    <property type="entry name" value="F64745"/>
</dbReference>
<dbReference type="RefSeq" id="NP_414748.1">
    <property type="nucleotide sequence ID" value="NC_000913.3"/>
</dbReference>
<dbReference type="RefSeq" id="WP_001052715.1">
    <property type="nucleotide sequence ID" value="NZ_SSZK01000029.1"/>
</dbReference>
<dbReference type="PDB" id="6RZ0">
    <property type="method" value="X-ray"/>
    <property type="resolution" value="1.10 A"/>
    <property type="chains" value="A=1-251"/>
</dbReference>
<dbReference type="PDB" id="6S0I">
    <property type="method" value="X-ray"/>
    <property type="resolution" value="1.80 A"/>
    <property type="chains" value="A=1-251"/>
</dbReference>
<dbReference type="PDBsum" id="6RZ0"/>
<dbReference type="PDBsum" id="6S0I"/>
<dbReference type="SMR" id="P0AC84"/>
<dbReference type="BioGRID" id="4262005">
    <property type="interactions" value="24"/>
</dbReference>
<dbReference type="DIP" id="DIP-48248N"/>
<dbReference type="FunCoup" id="P0AC84">
    <property type="interactions" value="694"/>
</dbReference>
<dbReference type="IntAct" id="P0AC84">
    <property type="interactions" value="1"/>
</dbReference>
<dbReference type="STRING" id="511145.b0212"/>
<dbReference type="jPOST" id="P0AC84"/>
<dbReference type="PaxDb" id="511145-b0212"/>
<dbReference type="EnsemblBacteria" id="AAC73317">
    <property type="protein sequence ID" value="AAC73317"/>
    <property type="gene ID" value="b0212"/>
</dbReference>
<dbReference type="GeneID" id="944902"/>
<dbReference type="KEGG" id="ecj:JW0202"/>
<dbReference type="KEGG" id="eco:b0212"/>
<dbReference type="KEGG" id="ecoc:C3026_00990"/>
<dbReference type="PATRIC" id="fig|1411691.4.peg.2072"/>
<dbReference type="EchoBASE" id="EB3114"/>
<dbReference type="eggNOG" id="COG0491">
    <property type="taxonomic scope" value="Bacteria"/>
</dbReference>
<dbReference type="HOGENOM" id="CLU_030571_4_1_6"/>
<dbReference type="InParanoid" id="P0AC84"/>
<dbReference type="OMA" id="NYIWLLQ"/>
<dbReference type="OrthoDB" id="9802248at2"/>
<dbReference type="PhylomeDB" id="P0AC84"/>
<dbReference type="BioCyc" id="EcoCyc:GLYOXII-MONOMER"/>
<dbReference type="BioCyc" id="MetaCyc:GLYOXII-MONOMER"/>
<dbReference type="BRENDA" id="3.1.2.6">
    <property type="organism ID" value="2026"/>
</dbReference>
<dbReference type="SABIO-RK" id="P0AC84"/>
<dbReference type="UniPathway" id="UPA00619">
    <property type="reaction ID" value="UER00676"/>
</dbReference>
<dbReference type="PRO" id="PR:P0AC84"/>
<dbReference type="Proteomes" id="UP000000625">
    <property type="component" value="Chromosome"/>
</dbReference>
<dbReference type="GO" id="GO:0004416">
    <property type="term" value="F:hydroxyacylglutathione hydrolase activity"/>
    <property type="evidence" value="ECO:0000314"/>
    <property type="project" value="EcoCyc"/>
</dbReference>
<dbReference type="GO" id="GO:0008270">
    <property type="term" value="F:zinc ion binding"/>
    <property type="evidence" value="ECO:0000314"/>
    <property type="project" value="EcoCyc"/>
</dbReference>
<dbReference type="GO" id="GO:0019243">
    <property type="term" value="P:methylglyoxal catabolic process to D-lactate via S-lactoyl-glutathione"/>
    <property type="evidence" value="ECO:0000314"/>
    <property type="project" value="EcoCyc"/>
</dbReference>
<dbReference type="GO" id="GO:0009408">
    <property type="term" value="P:response to heat"/>
    <property type="evidence" value="ECO:0000315"/>
    <property type="project" value="EcoCyc"/>
</dbReference>
<dbReference type="GO" id="GO:0009636">
    <property type="term" value="P:response to toxic substance"/>
    <property type="evidence" value="ECO:0007669"/>
    <property type="project" value="UniProtKB-KW"/>
</dbReference>
<dbReference type="CDD" id="cd07723">
    <property type="entry name" value="hydroxyacylglutathione_hydrolase_MBL-fold"/>
    <property type="match status" value="1"/>
</dbReference>
<dbReference type="FunFam" id="3.60.15.10:FF:000012">
    <property type="entry name" value="Hydroxyacylglutathione hydrolase"/>
    <property type="match status" value="1"/>
</dbReference>
<dbReference type="Gene3D" id="3.60.15.10">
    <property type="entry name" value="Ribonuclease Z/Hydroxyacylglutathione hydrolase-like"/>
    <property type="match status" value="1"/>
</dbReference>
<dbReference type="HAMAP" id="MF_01374">
    <property type="entry name" value="Glyoxalase_2"/>
    <property type="match status" value="1"/>
</dbReference>
<dbReference type="InterPro" id="IPR035680">
    <property type="entry name" value="Clx_II_MBL"/>
</dbReference>
<dbReference type="InterPro" id="IPR050110">
    <property type="entry name" value="Glyoxalase_II_hydrolase"/>
</dbReference>
<dbReference type="InterPro" id="IPR032282">
    <property type="entry name" value="HAGH_C"/>
</dbReference>
<dbReference type="InterPro" id="IPR017782">
    <property type="entry name" value="Hydroxyacylglutathione_Hdrlase"/>
</dbReference>
<dbReference type="InterPro" id="IPR001279">
    <property type="entry name" value="Metallo-B-lactamas"/>
</dbReference>
<dbReference type="InterPro" id="IPR036866">
    <property type="entry name" value="RibonucZ/Hydroxyglut_hydro"/>
</dbReference>
<dbReference type="NCBIfam" id="TIGR03413">
    <property type="entry name" value="GSH_gloB"/>
    <property type="match status" value="1"/>
</dbReference>
<dbReference type="NCBIfam" id="NF007597">
    <property type="entry name" value="PRK10241.1"/>
    <property type="match status" value="1"/>
</dbReference>
<dbReference type="PANTHER" id="PTHR43705">
    <property type="entry name" value="HYDROXYACYLGLUTATHIONE HYDROLASE"/>
    <property type="match status" value="1"/>
</dbReference>
<dbReference type="PANTHER" id="PTHR43705:SF1">
    <property type="entry name" value="HYDROXYACYLGLUTATHIONE HYDROLASE GLOB"/>
    <property type="match status" value="1"/>
</dbReference>
<dbReference type="Pfam" id="PF16123">
    <property type="entry name" value="HAGH_C"/>
    <property type="match status" value="1"/>
</dbReference>
<dbReference type="Pfam" id="PF00753">
    <property type="entry name" value="Lactamase_B"/>
    <property type="match status" value="1"/>
</dbReference>
<dbReference type="PIRSF" id="PIRSF005457">
    <property type="entry name" value="Glx"/>
    <property type="match status" value="1"/>
</dbReference>
<dbReference type="SMART" id="SM00849">
    <property type="entry name" value="Lactamase_B"/>
    <property type="match status" value="1"/>
</dbReference>
<dbReference type="SUPFAM" id="SSF56281">
    <property type="entry name" value="Metallo-hydrolase/oxidoreductase"/>
    <property type="match status" value="1"/>
</dbReference>
<comment type="function">
    <text evidence="2 3">Type II glyoxalase that catalyzes the hydrolysis of (R)-S-lactoylglutathione to (R)-lactate and glutathione (PubMed:17196158, PubMed:25670698). Is more efficient than the isozyme GloC, and plays a major contribution to methylglyoxal (MG) detoxification in E.coli (PubMed:25670698). The two isoenzymes have additive effects and ensure maximal MG degradation (PubMed:25670698).</text>
</comment>
<comment type="catalytic activity">
    <reaction evidence="2 3">
        <text>an S-(2-hydroxyacyl)glutathione + H2O = a 2-hydroxy carboxylate + glutathione + H(+)</text>
        <dbReference type="Rhea" id="RHEA:21864"/>
        <dbReference type="ChEBI" id="CHEBI:15377"/>
        <dbReference type="ChEBI" id="CHEBI:15378"/>
        <dbReference type="ChEBI" id="CHEBI:57925"/>
        <dbReference type="ChEBI" id="CHEBI:58896"/>
        <dbReference type="ChEBI" id="CHEBI:71261"/>
        <dbReference type="EC" id="3.1.2.6"/>
    </reaction>
</comment>
<comment type="catalytic activity">
    <reaction evidence="2 3">
        <text>(R)-S-lactoylglutathione + H2O = (R)-lactate + glutathione + H(+)</text>
        <dbReference type="Rhea" id="RHEA:25245"/>
        <dbReference type="ChEBI" id="CHEBI:15377"/>
        <dbReference type="ChEBI" id="CHEBI:15378"/>
        <dbReference type="ChEBI" id="CHEBI:16004"/>
        <dbReference type="ChEBI" id="CHEBI:57474"/>
        <dbReference type="ChEBI" id="CHEBI:57925"/>
        <dbReference type="EC" id="3.1.2.6"/>
    </reaction>
</comment>
<comment type="cofactor">
    <cofactor evidence="2 8">
        <name>Zn(2+)</name>
        <dbReference type="ChEBI" id="CHEBI:29105"/>
    </cofactor>
    <text evidence="2">Binds 2 Zn(2+) ions per subunit. Mn(2+) and Co(2+) can substitute for zinc in reconstitution experiments.</text>
</comment>
<comment type="activity regulation">
    <text evidence="3">Is inhibited by Cu(2+).</text>
</comment>
<comment type="biophysicochemical properties">
    <kinetics>
        <KM evidence="2">184 uM for (R)-S-lactoylglutathione</KM>
        <KM evidence="3">0.5 mM for (R)-S-lactoylglutathione</KM>
        <Vmax evidence="2">112.0 umol/min/mg enzyme for the hydrolysis of (R)-S-lactoylglutathione</Vmax>
        <text evidence="2 3">kcat is 53 sec(-1) for the hydrolysis of (R)-S-lactoylglutathione (PubMed:17196158). kcat is 15.6 sec(-1) for the hydrolysis of (R)-S-lactoylglutathione (PubMed:25670698).</text>
    </kinetics>
</comment>
<comment type="pathway">
    <text evidence="3">Secondary metabolite metabolism; methylglyoxal degradation; (R)-lactate from methylglyoxal: step 2/2.</text>
</comment>
<comment type="subunit">
    <text evidence="2">Monomer.</text>
</comment>
<comment type="mass spectrometry" mass="28432.0" method="Electrospray" evidence="2"/>
<comment type="disruption phenotype">
    <text evidence="3">Cells lacking this gene show decreased methylglyoxal tolerance. A double deletion mutant lacking both gloB and gloC exhibits almost no resistance to exogenously supplied methylglyoxal, and is unable to grow at MG concentrations as low as 0.1 mM.</text>
</comment>
<comment type="similarity">
    <text evidence="6">Belongs to the metallo-beta-lactamase superfamily. Glyoxalase II family.</text>
</comment>
<feature type="chain" id="PRO_0000192351" description="Hydroxyacylglutathione hydrolase GloB">
    <location>
        <begin position="1"/>
        <end position="251"/>
    </location>
</feature>
<feature type="binding site" evidence="1">
    <location>
        <position position="53"/>
    </location>
    <ligand>
        <name>Zn(2+)</name>
        <dbReference type="ChEBI" id="CHEBI:29105"/>
        <label>1</label>
    </ligand>
</feature>
<feature type="binding site" evidence="1">
    <location>
        <position position="55"/>
    </location>
    <ligand>
        <name>Zn(2+)</name>
        <dbReference type="ChEBI" id="CHEBI:29105"/>
        <label>1</label>
    </ligand>
</feature>
<feature type="binding site" evidence="1">
    <location>
        <position position="57"/>
    </location>
    <ligand>
        <name>Zn(2+)</name>
        <dbReference type="ChEBI" id="CHEBI:29105"/>
        <label>2</label>
    </ligand>
</feature>
<feature type="binding site" evidence="1">
    <location>
        <position position="58"/>
    </location>
    <ligand>
        <name>Zn(2+)</name>
        <dbReference type="ChEBI" id="CHEBI:29105"/>
        <label>2</label>
    </ligand>
</feature>
<feature type="binding site" evidence="1">
    <location>
        <position position="110"/>
    </location>
    <ligand>
        <name>Zn(2+)</name>
        <dbReference type="ChEBI" id="CHEBI:29105"/>
        <label>1</label>
    </ligand>
</feature>
<feature type="binding site" evidence="1">
    <location>
        <position position="127"/>
    </location>
    <ligand>
        <name>Zn(2+)</name>
        <dbReference type="ChEBI" id="CHEBI:29105"/>
        <label>1</label>
    </ligand>
</feature>
<feature type="binding site" evidence="1">
    <location>
        <position position="127"/>
    </location>
    <ligand>
        <name>Zn(2+)</name>
        <dbReference type="ChEBI" id="CHEBI:29105"/>
        <label>2</label>
    </ligand>
</feature>
<feature type="binding site" evidence="1">
    <location>
        <begin position="136"/>
        <end position="138"/>
    </location>
    <ligand>
        <name>substrate</name>
    </ligand>
</feature>
<feature type="binding site" evidence="1">
    <location>
        <begin position="165"/>
        <end position="167"/>
    </location>
    <ligand>
        <name>substrate</name>
    </ligand>
</feature>
<feature type="binding site" evidence="1">
    <location>
        <position position="165"/>
    </location>
    <ligand>
        <name>Zn(2+)</name>
        <dbReference type="ChEBI" id="CHEBI:29105"/>
        <label>2</label>
    </ligand>
</feature>
<feature type="binding site" evidence="1">
    <location>
        <begin position="245"/>
        <end position="248"/>
    </location>
    <ligand>
        <name>substrate</name>
    </ligand>
</feature>
<feature type="strand" evidence="9">
    <location>
        <begin position="2"/>
        <end position="8"/>
    </location>
</feature>
<feature type="turn" evidence="9">
    <location>
        <begin position="9"/>
        <end position="11"/>
    </location>
</feature>
<feature type="strand" evidence="9">
    <location>
        <begin position="12"/>
        <end position="18"/>
    </location>
</feature>
<feature type="strand" evidence="9">
    <location>
        <begin position="23"/>
        <end position="27"/>
    </location>
</feature>
<feature type="helix" evidence="9">
    <location>
        <begin position="32"/>
        <end position="42"/>
    </location>
</feature>
<feature type="strand" evidence="9">
    <location>
        <begin position="45"/>
        <end position="50"/>
    </location>
</feature>
<feature type="helix" evidence="9">
    <location>
        <begin position="56"/>
        <end position="59"/>
    </location>
</feature>
<feature type="helix" evidence="9">
    <location>
        <begin position="62"/>
        <end position="68"/>
    </location>
</feature>
<feature type="strand" evidence="9">
    <location>
        <begin position="73"/>
        <end position="76"/>
    </location>
</feature>
<feature type="helix" evidence="9">
    <location>
        <begin position="78"/>
        <end position="83"/>
    </location>
</feature>
<feature type="strand" evidence="9">
    <location>
        <begin position="86"/>
        <end position="88"/>
    </location>
</feature>
<feature type="strand" evidence="9">
    <location>
        <begin position="94"/>
        <end position="97"/>
    </location>
</feature>
<feature type="strand" evidence="9">
    <location>
        <begin position="100"/>
        <end position="106"/>
    </location>
</feature>
<feature type="strand" evidence="9">
    <location>
        <begin position="109"/>
        <end position="111"/>
    </location>
</feature>
<feature type="strand" evidence="9">
    <location>
        <begin position="115"/>
        <end position="119"/>
    </location>
</feature>
<feature type="strand" evidence="9">
    <location>
        <begin position="122"/>
        <end position="126"/>
    </location>
</feature>
<feature type="strand" evidence="9">
    <location>
        <begin position="138"/>
        <end position="140"/>
    </location>
</feature>
<feature type="helix" evidence="9">
    <location>
        <begin position="142"/>
        <end position="153"/>
    </location>
</feature>
<feature type="strand" evidence="9">
    <location>
        <begin position="160"/>
        <end position="165"/>
    </location>
</feature>
<feature type="helix" evidence="9">
    <location>
        <begin position="168"/>
        <end position="178"/>
    </location>
</feature>
<feature type="helix" evidence="9">
    <location>
        <begin position="183"/>
        <end position="197"/>
    </location>
</feature>
<feature type="helix" evidence="9">
    <location>
        <begin position="207"/>
        <end position="213"/>
    </location>
</feature>
<feature type="helix" evidence="9">
    <location>
        <begin position="215"/>
        <end position="217"/>
    </location>
</feature>
<feature type="helix" evidence="9">
    <location>
        <begin position="222"/>
        <end position="229"/>
    </location>
</feature>
<feature type="helix" evidence="9">
    <location>
        <begin position="237"/>
        <end position="250"/>
    </location>
</feature>
<evidence type="ECO:0000250" key="1">
    <source>
        <dbReference type="UniProtKB" id="Q16775"/>
    </source>
</evidence>
<evidence type="ECO:0000269" key="2">
    <source>
    </source>
</evidence>
<evidence type="ECO:0000269" key="3">
    <source>
    </source>
</evidence>
<evidence type="ECO:0000303" key="4">
    <source>
    </source>
</evidence>
<evidence type="ECO:0000303" key="5">
    <source>
    </source>
</evidence>
<evidence type="ECO:0000305" key="6"/>
<evidence type="ECO:0000305" key="7">
    <source>
    </source>
</evidence>
<evidence type="ECO:0000305" key="8">
    <source>
    </source>
</evidence>
<evidence type="ECO:0007829" key="9">
    <source>
        <dbReference type="PDB" id="6RZ0"/>
    </source>
</evidence>
<sequence length="251" mass="28434">MNLNSIPAFDDNYIWVLNDEAGRCLIVDPGDAEPVLNAIAANNWQPEAIFLTHHHHDHVGGVKELVEKFPQIVVYGPQETQDKGTTQVVKDGETAFVLGHEFSVIATPGHTLGHICYFSKPYLFCGDTLFSGGCGRLFEGTASQMYQSLKKLSALPDDTLVCCAHEYTLSNMKFALSILPHDLSINDYYRKVKELRAKNQITLPVILKNERQINVFLRTEDIDLINVINEETLLQQPEERFAWLRSKKDRF</sequence>
<keyword id="KW-0002">3D-structure</keyword>
<keyword id="KW-0216">Detoxification</keyword>
<keyword id="KW-0378">Hydrolase</keyword>
<keyword id="KW-0479">Metal-binding</keyword>
<keyword id="KW-1185">Reference proteome</keyword>
<keyword id="KW-0862">Zinc</keyword>
<accession>P0AC84</accession>
<accession>Q47677</accession>
<organism>
    <name type="scientific">Escherichia coli (strain K12)</name>
    <dbReference type="NCBI Taxonomy" id="83333"/>
    <lineage>
        <taxon>Bacteria</taxon>
        <taxon>Pseudomonadati</taxon>
        <taxon>Pseudomonadota</taxon>
        <taxon>Gammaproteobacteria</taxon>
        <taxon>Enterobacterales</taxon>
        <taxon>Enterobacteriaceae</taxon>
        <taxon>Escherichia</taxon>
    </lineage>
</organism>
<proteinExistence type="evidence at protein level"/>